<accession>P26707</accession>
<dbReference type="EMBL" id="M58155">
    <property type="protein sequence ID" value="AAA42718.1"/>
    <property type="molecule type" value="Genomic_DNA"/>
</dbReference>
<dbReference type="PIR" id="C36821">
    <property type="entry name" value="C36821"/>
</dbReference>
<dbReference type="GO" id="GO:0044172">
    <property type="term" value="C:host cell endoplasmic reticulum-Golgi intermediate compartment"/>
    <property type="evidence" value="ECO:0007669"/>
    <property type="project" value="UniProtKB-SubCell"/>
</dbReference>
<dbReference type="GO" id="GO:0044423">
    <property type="term" value="C:virion component"/>
    <property type="evidence" value="ECO:0007669"/>
    <property type="project" value="UniProtKB-KW"/>
</dbReference>
<dbReference type="InterPro" id="IPR004848">
    <property type="entry name" value="ASFV_fam_110"/>
</dbReference>
<dbReference type="Pfam" id="PF01639">
    <property type="entry name" value="v110"/>
    <property type="match status" value="1"/>
</dbReference>
<protein>
    <recommendedName>
        <fullName>Protein MGF 110-4L</fullName>
    </recommendedName>
</protein>
<reference key="1">
    <citation type="journal article" date="1990" name="Virology">
        <title>Genetic variation and multigene families in African swine fever virus.</title>
        <authorList>
            <person name="de la Vega I."/>
            <person name="Vinuela E."/>
            <person name="Blasco R."/>
        </authorList>
    </citation>
    <scope>NUCLEOTIDE SEQUENCE [GENOMIC DNA]</scope>
</reference>
<sequence length="124" mass="14452">MLVIFLGILGLLANQVLGLPTQAEGHLRSTDNPPQEELGYWCTYMESCKFCWECEHGICKNKVNRSMPWIIENSYLTSCEVSRWYNQCTYDEGNGHYHVMDCSNPVPHNRPHRLGRKIYEKEDL</sequence>
<comment type="function">
    <text evidence="1">Causes the redistribution of lumenal ER protein to an enlarged ERGIC compartment.</text>
</comment>
<comment type="subcellular location">
    <subcellularLocation>
        <location evidence="1">Virion</location>
    </subcellularLocation>
    <subcellularLocation>
        <location evidence="1">Host endoplasmic reticulum-Golgi intermediate compartment</location>
    </subcellularLocation>
</comment>
<comment type="induction">
    <text evidence="3">Expressed in the early phase of the viral replicative cycle.</text>
</comment>
<comment type="similarity">
    <text evidence="3">Belongs to the asfivirus MGF 110 family.</text>
</comment>
<organismHost>
    <name type="scientific">Ornithodoros</name>
    <name type="common">relapsing fever ticks</name>
    <dbReference type="NCBI Taxonomy" id="6937"/>
</organismHost>
<organismHost>
    <name type="scientific">Sus scrofa</name>
    <name type="common">Pig</name>
    <dbReference type="NCBI Taxonomy" id="9823"/>
</organismHost>
<keyword id="KW-0244">Early protein</keyword>
<keyword id="KW-0325">Glycoprotein</keyword>
<keyword id="KW-0732">Signal</keyword>
<keyword id="KW-0946">Virion</keyword>
<gene>
    <name type="ORF">LIS124-1</name>
</gene>
<evidence type="ECO:0000250" key="1">
    <source>
        <dbReference type="UniProtKB" id="P18558"/>
    </source>
</evidence>
<evidence type="ECO:0000255" key="2"/>
<evidence type="ECO:0000305" key="3"/>
<name>1104L_ASFL5</name>
<feature type="signal peptide" evidence="2">
    <location>
        <begin position="1"/>
        <end position="18"/>
    </location>
</feature>
<feature type="chain" id="PRO_0000036737" description="Protein MGF 110-4L">
    <location>
        <begin position="19"/>
        <end position="124"/>
    </location>
</feature>
<feature type="short sequence motif" description="Prevents secretion from ER" evidence="1">
    <location>
        <begin position="121"/>
        <end position="124"/>
    </location>
</feature>
<feature type="glycosylation site" description="N-linked (GlcNAc...) asparagine; by host" evidence="2">
    <location>
        <position position="64"/>
    </location>
</feature>
<organism>
    <name type="scientific">African swine fever virus (isolate Portugal/Lis 57/1957)</name>
    <name type="common">ASFV</name>
    <dbReference type="NCBI Taxonomy" id="10499"/>
    <lineage>
        <taxon>Viruses</taxon>
        <taxon>Varidnaviria</taxon>
        <taxon>Bamfordvirae</taxon>
        <taxon>Nucleocytoviricota</taxon>
        <taxon>Pokkesviricetes</taxon>
        <taxon>Asfuvirales</taxon>
        <taxon>Asfarviridae</taxon>
        <taxon>Asfivirus</taxon>
        <taxon>African swine fever virus</taxon>
    </lineage>
</organism>
<proteinExistence type="inferred from homology"/>